<reference key="1">
    <citation type="journal article" date="2005" name="J. Bacteriol.">
        <title>Insights into genome plasticity and pathogenicity of the plant pathogenic Bacterium Xanthomonas campestris pv. vesicatoria revealed by the complete genome sequence.</title>
        <authorList>
            <person name="Thieme F."/>
            <person name="Koebnik R."/>
            <person name="Bekel T."/>
            <person name="Berger C."/>
            <person name="Boch J."/>
            <person name="Buettner D."/>
            <person name="Caldana C."/>
            <person name="Gaigalat L."/>
            <person name="Goesmann A."/>
            <person name="Kay S."/>
            <person name="Kirchner O."/>
            <person name="Lanz C."/>
            <person name="Linke B."/>
            <person name="McHardy A.C."/>
            <person name="Meyer F."/>
            <person name="Mittenhuber G."/>
            <person name="Nies D.H."/>
            <person name="Niesbach-Kloesgen U."/>
            <person name="Patschkowski T."/>
            <person name="Rueckert C."/>
            <person name="Rupp O."/>
            <person name="Schneiker S."/>
            <person name="Schuster S.C."/>
            <person name="Vorhoelter F.J."/>
            <person name="Weber E."/>
            <person name="Puehler A."/>
            <person name="Bonas U."/>
            <person name="Bartels D."/>
            <person name="Kaiser O."/>
        </authorList>
    </citation>
    <scope>NUCLEOTIDE SEQUENCE [LARGE SCALE GENOMIC DNA]</scope>
    <source>
        <strain>85-10</strain>
    </source>
</reference>
<protein>
    <recommendedName>
        <fullName evidence="1">UPF0761 membrane protein XCV0968</fullName>
    </recommendedName>
</protein>
<gene>
    <name type="ordered locus">XCV0968</name>
</gene>
<comment type="subcellular location">
    <subcellularLocation>
        <location evidence="1">Cell inner membrane</location>
        <topology evidence="1">Multi-pass membrane protein</topology>
    </subcellularLocation>
</comment>
<comment type="similarity">
    <text evidence="1">Belongs to the UPF0761 family.</text>
</comment>
<accession>Q3BX14</accession>
<proteinExistence type="inferred from homology"/>
<organism>
    <name type="scientific">Xanthomonas euvesicatoria pv. vesicatoria (strain 85-10)</name>
    <name type="common">Xanthomonas campestris pv. vesicatoria</name>
    <dbReference type="NCBI Taxonomy" id="316273"/>
    <lineage>
        <taxon>Bacteria</taxon>
        <taxon>Pseudomonadati</taxon>
        <taxon>Pseudomonadota</taxon>
        <taxon>Gammaproteobacteria</taxon>
        <taxon>Lysobacterales</taxon>
        <taxon>Lysobacteraceae</taxon>
        <taxon>Xanthomonas</taxon>
    </lineage>
</organism>
<evidence type="ECO:0000255" key="1">
    <source>
        <dbReference type="HAMAP-Rule" id="MF_00672"/>
    </source>
</evidence>
<feature type="chain" id="PRO_1000044736" description="UPF0761 membrane protein XCV0968">
    <location>
        <begin position="1"/>
        <end position="425"/>
    </location>
</feature>
<feature type="transmembrane region" description="Helical" evidence="1">
    <location>
        <begin position="48"/>
        <end position="68"/>
    </location>
</feature>
<feature type="transmembrane region" description="Helical" evidence="1">
    <location>
        <begin position="105"/>
        <end position="125"/>
    </location>
</feature>
<feature type="transmembrane region" description="Helical" evidence="1">
    <location>
        <begin position="154"/>
        <end position="174"/>
    </location>
</feature>
<feature type="transmembrane region" description="Helical" evidence="1">
    <location>
        <begin position="182"/>
        <end position="202"/>
    </location>
</feature>
<feature type="transmembrane region" description="Helical" evidence="1">
    <location>
        <begin position="216"/>
        <end position="236"/>
    </location>
</feature>
<feature type="transmembrane region" description="Helical" evidence="1">
    <location>
        <begin position="250"/>
        <end position="270"/>
    </location>
</feature>
<sequence length="425" mass="48288">MSRVNKLHQWKERLRDRARTVSFGRFLWRRFLDDRLFQAAASLAYTTVFALVPLAIVVFGVLSAFPAFNEWKDALTDFIFNNFVPGAARSVQNYLNRSLEDLGKFTVAGMVALVASLLITLHSIEQTFNSIWRVAAARPKVTRFLIYWTVLTLGTMLAAASMAMAAYVFALPLFRTTEGQWLAEFAWRLAPMAVEFVCIVLIYRVVPQHVVRLRHALPGALLAVILMEIVKWGFGFYLGNFQTYQRIYGALSALPILLLWIYLSWVSVLLGASLASSMSAFRYQPEAMRLPPGFEIYGLLRLLGRFRQARVHGDGLDEDRILALEPMLTDTLMQELLCELKRIRLLRRDERGQWLLARDLDVVPLAELYENCQLRVPIEDRPLPCRDDAYGQAAAAALEQLRQPLRSVLAQPVGDLYTHLPGDPP</sequence>
<dbReference type="EMBL" id="AM039952">
    <property type="protein sequence ID" value="CAJ22599.1"/>
    <property type="molecule type" value="Genomic_DNA"/>
</dbReference>
<dbReference type="RefSeq" id="WP_008578148.1">
    <property type="nucleotide sequence ID" value="NZ_CP017190.1"/>
</dbReference>
<dbReference type="SMR" id="Q3BX14"/>
<dbReference type="STRING" id="456327.BJD11_17925"/>
<dbReference type="KEGG" id="xcv:XCV0968"/>
<dbReference type="eggNOG" id="COG1295">
    <property type="taxonomic scope" value="Bacteria"/>
</dbReference>
<dbReference type="HOGENOM" id="CLU_032288_1_0_6"/>
<dbReference type="Proteomes" id="UP000007069">
    <property type="component" value="Chromosome"/>
</dbReference>
<dbReference type="GO" id="GO:0005886">
    <property type="term" value="C:plasma membrane"/>
    <property type="evidence" value="ECO:0007669"/>
    <property type="project" value="UniProtKB-SubCell"/>
</dbReference>
<dbReference type="HAMAP" id="MF_00672">
    <property type="entry name" value="UPF0761"/>
    <property type="match status" value="1"/>
</dbReference>
<dbReference type="InterPro" id="IPR023679">
    <property type="entry name" value="UPF0761_bac"/>
</dbReference>
<dbReference type="InterPro" id="IPR017039">
    <property type="entry name" value="Virul_fac_BrkB"/>
</dbReference>
<dbReference type="NCBIfam" id="NF003256">
    <property type="entry name" value="PRK04214.1"/>
    <property type="match status" value="1"/>
</dbReference>
<dbReference type="NCBIfam" id="TIGR00765">
    <property type="entry name" value="yihY_not_rbn"/>
    <property type="match status" value="1"/>
</dbReference>
<dbReference type="PANTHER" id="PTHR30213">
    <property type="entry name" value="INNER MEMBRANE PROTEIN YHJD"/>
    <property type="match status" value="1"/>
</dbReference>
<dbReference type="PANTHER" id="PTHR30213:SF0">
    <property type="entry name" value="UPF0761 MEMBRANE PROTEIN YIHY"/>
    <property type="match status" value="1"/>
</dbReference>
<dbReference type="Pfam" id="PF03631">
    <property type="entry name" value="Virul_fac_BrkB"/>
    <property type="match status" value="1"/>
</dbReference>
<name>Y968_XANE5</name>
<keyword id="KW-0997">Cell inner membrane</keyword>
<keyword id="KW-1003">Cell membrane</keyword>
<keyword id="KW-0472">Membrane</keyword>
<keyword id="KW-0812">Transmembrane</keyword>
<keyword id="KW-1133">Transmembrane helix</keyword>